<keyword id="KW-0067">ATP-binding</keyword>
<keyword id="KW-0347">Helicase</keyword>
<keyword id="KW-0378">Hydrolase</keyword>
<keyword id="KW-0547">Nucleotide-binding</keyword>
<keyword id="KW-0539">Nucleus</keyword>
<keyword id="KW-1185">Reference proteome</keyword>
<keyword id="KW-0690">Ribosome biogenesis</keyword>
<keyword id="KW-0694">RNA-binding</keyword>
<keyword id="KW-0698">rRNA processing</keyword>
<dbReference type="EC" id="3.6.4.13"/>
<dbReference type="EMBL" id="CM002239">
    <property type="protein sequence ID" value="EAA32541.1"/>
    <property type="molecule type" value="Genomic_DNA"/>
</dbReference>
<dbReference type="RefSeq" id="XP_961777.1">
    <property type="nucleotide sequence ID" value="XM_956684.2"/>
</dbReference>
<dbReference type="SMR" id="Q7S873"/>
<dbReference type="FunCoup" id="Q7S873">
    <property type="interactions" value="716"/>
</dbReference>
<dbReference type="STRING" id="367110.Q7S873"/>
<dbReference type="PaxDb" id="5141-EFNCRP00000006307"/>
<dbReference type="EnsemblFungi" id="EAA32541">
    <property type="protein sequence ID" value="EAA32541"/>
    <property type="gene ID" value="NCU06520"/>
</dbReference>
<dbReference type="GeneID" id="3877925"/>
<dbReference type="KEGG" id="ncr:NCU06520"/>
<dbReference type="VEuPathDB" id="FungiDB:NCU06520"/>
<dbReference type="HOGENOM" id="CLU_003041_26_2_1"/>
<dbReference type="InParanoid" id="Q7S873"/>
<dbReference type="OMA" id="AVHIKAD"/>
<dbReference type="OrthoDB" id="422663at2759"/>
<dbReference type="Proteomes" id="UP000001805">
    <property type="component" value="Chromosome 4, Linkage Group IV"/>
</dbReference>
<dbReference type="GO" id="GO:0005730">
    <property type="term" value="C:nucleolus"/>
    <property type="evidence" value="ECO:0007669"/>
    <property type="project" value="UniProtKB-SubCell"/>
</dbReference>
<dbReference type="GO" id="GO:0005634">
    <property type="term" value="C:nucleus"/>
    <property type="evidence" value="ECO:0000318"/>
    <property type="project" value="GO_Central"/>
</dbReference>
<dbReference type="GO" id="GO:0005524">
    <property type="term" value="F:ATP binding"/>
    <property type="evidence" value="ECO:0007669"/>
    <property type="project" value="UniProtKB-KW"/>
</dbReference>
<dbReference type="GO" id="GO:0016887">
    <property type="term" value="F:ATP hydrolysis activity"/>
    <property type="evidence" value="ECO:0007669"/>
    <property type="project" value="RHEA"/>
</dbReference>
<dbReference type="GO" id="GO:0003723">
    <property type="term" value="F:RNA binding"/>
    <property type="evidence" value="ECO:0007669"/>
    <property type="project" value="UniProtKB-KW"/>
</dbReference>
<dbReference type="GO" id="GO:0003724">
    <property type="term" value="F:RNA helicase activity"/>
    <property type="evidence" value="ECO:0007669"/>
    <property type="project" value="UniProtKB-EC"/>
</dbReference>
<dbReference type="GO" id="GO:0000464">
    <property type="term" value="P:endonucleolytic cleavage in ITS1 upstream of 5.8S rRNA from tricistronic rRNA transcript (SSU-rRNA, 5.8S rRNA, LSU-rRNA)"/>
    <property type="evidence" value="ECO:0007669"/>
    <property type="project" value="EnsemblFungi"/>
</dbReference>
<dbReference type="GO" id="GO:0042254">
    <property type="term" value="P:ribosome biogenesis"/>
    <property type="evidence" value="ECO:0000318"/>
    <property type="project" value="GO_Central"/>
</dbReference>
<dbReference type="CDD" id="cd17949">
    <property type="entry name" value="DEADc_DDX31"/>
    <property type="match status" value="1"/>
</dbReference>
<dbReference type="CDD" id="cd18787">
    <property type="entry name" value="SF2_C_DEAD"/>
    <property type="match status" value="1"/>
</dbReference>
<dbReference type="Gene3D" id="3.40.50.300">
    <property type="entry name" value="P-loop containing nucleotide triphosphate hydrolases"/>
    <property type="match status" value="2"/>
</dbReference>
<dbReference type="InterPro" id="IPR011545">
    <property type="entry name" value="DEAD/DEAH_box_helicase_dom"/>
</dbReference>
<dbReference type="InterPro" id="IPR014001">
    <property type="entry name" value="Helicase_ATP-bd"/>
</dbReference>
<dbReference type="InterPro" id="IPR001650">
    <property type="entry name" value="Helicase_C-like"/>
</dbReference>
<dbReference type="InterPro" id="IPR027417">
    <property type="entry name" value="P-loop_NTPase"/>
</dbReference>
<dbReference type="InterPro" id="IPR025313">
    <property type="entry name" value="SPB4-like_CTE"/>
</dbReference>
<dbReference type="PANTHER" id="PTHR24031">
    <property type="entry name" value="RNA HELICASE"/>
    <property type="match status" value="1"/>
</dbReference>
<dbReference type="Pfam" id="PF13959">
    <property type="entry name" value="CTE_SPB4"/>
    <property type="match status" value="1"/>
</dbReference>
<dbReference type="Pfam" id="PF00270">
    <property type="entry name" value="DEAD"/>
    <property type="match status" value="1"/>
</dbReference>
<dbReference type="Pfam" id="PF00271">
    <property type="entry name" value="Helicase_C"/>
    <property type="match status" value="1"/>
</dbReference>
<dbReference type="SMART" id="SM00487">
    <property type="entry name" value="DEXDc"/>
    <property type="match status" value="1"/>
</dbReference>
<dbReference type="SMART" id="SM01178">
    <property type="entry name" value="DUF4217"/>
    <property type="match status" value="1"/>
</dbReference>
<dbReference type="SMART" id="SM00490">
    <property type="entry name" value="HELICc"/>
    <property type="match status" value="1"/>
</dbReference>
<dbReference type="SUPFAM" id="SSF52540">
    <property type="entry name" value="P-loop containing nucleoside triphosphate hydrolases"/>
    <property type="match status" value="2"/>
</dbReference>
<dbReference type="PROSITE" id="PS51192">
    <property type="entry name" value="HELICASE_ATP_BIND_1"/>
    <property type="match status" value="1"/>
</dbReference>
<dbReference type="PROSITE" id="PS51194">
    <property type="entry name" value="HELICASE_CTER"/>
    <property type="match status" value="1"/>
</dbReference>
<dbReference type="PROSITE" id="PS51195">
    <property type="entry name" value="Q_MOTIF"/>
    <property type="match status" value="1"/>
</dbReference>
<proteinExistence type="inferred from homology"/>
<comment type="function">
    <text evidence="1">ATP-binding RNA helicase involved in the biogenesis of 60S ribosomal subunits and is required for the normal formation of 25S and 5.8S rRNAs.</text>
</comment>
<comment type="catalytic activity">
    <reaction>
        <text>ATP + H2O = ADP + phosphate + H(+)</text>
        <dbReference type="Rhea" id="RHEA:13065"/>
        <dbReference type="ChEBI" id="CHEBI:15377"/>
        <dbReference type="ChEBI" id="CHEBI:15378"/>
        <dbReference type="ChEBI" id="CHEBI:30616"/>
        <dbReference type="ChEBI" id="CHEBI:43474"/>
        <dbReference type="ChEBI" id="CHEBI:456216"/>
        <dbReference type="EC" id="3.6.4.13"/>
    </reaction>
</comment>
<comment type="subcellular location">
    <subcellularLocation>
        <location evidence="1">Nucleus</location>
        <location evidence="1">Nucleolus</location>
    </subcellularLocation>
</comment>
<comment type="domain">
    <text>The Q motif is unique to and characteristic of the DEAD box family of RNA helicases and controls ATP binding and hydrolysis.</text>
</comment>
<comment type="miscellaneous">
    <text>Present with 1460 molecules/cell in log phase SD medium.</text>
</comment>
<comment type="similarity">
    <text evidence="5">Belongs to the DEAD box helicase family. DDX31/DBP7 subfamily.</text>
</comment>
<sequence length="814" mass="88507">MADDGDMFLNFEIGDAPIKQTVKYTGGRWRDRVKAQKGEKGGQDQSKQASTARRDTGADYYTNRAAKRQRTEDGDSGRFSKTPRTGNAAERGPPPPPTHAMKTGLVSSRLFTSNPVPVTDFEELPQAEEAEPAQPSNAPLSAEAENFLSLGLSRRVSQHLATKLEMKAPTAIQKNTIPQLVKEDSDAFLQAETGSGKTLAYLLPIVHRILALSHNEDGTPKTTKVHRNSGLFAIILAPTRELCKQIAVVLEKVLRCAPWLVCTTVIGGESKKSEKARIRKGVNILIATPGRLTDHLDNTKVLDVGTVRWLVLDEGDRMMEMGFEDDIKTIVGKIRAGTLQKKNAEGVVLDGVLPSRRVTVLCSATMKMNVQKLGEISLEDAVHITASKSDMEKDAETGAVETAFSAPAQLKQAAIVTPAKLRLVTLIALLKSTFARKGSVMKAIIFISCADSVDYHFELLKSTTPRAEPEPKPEGEAPTKPNIHIESTVAPATYITSPANPTVMLHKLHGSLAQPVRSATLKAFSECKDPAVLITTDISSRGLDVPAVELVIEYDPAFAVPDHVHRIGRTARAGRAGKAVLFLLPGSEEGYISILPKSTPIAPQLYDSILQKGFATNINVPGTESGVLETDRQSWASRAEALQLHFEQRLLAPLPGATPVFESKSEKFAASKQGKKGKKDAKKDENKTPDNPLLVSARQAFRSHIRAYATHVREERVYFDITALHLGHMAKAFGLREAPGGIGGGVSRRTHRPVQPGDKTNKTSKSVGDGTARRPKKDDDDERDFGAADEDAGRRMKEKMKMMMGNMASEFNLG</sequence>
<protein>
    <recommendedName>
        <fullName>ATP-dependent RNA helicase dbp-7</fullName>
        <ecNumber>3.6.4.13</ecNumber>
    </recommendedName>
</protein>
<reference key="1">
    <citation type="journal article" date="2003" name="Nature">
        <title>The genome sequence of the filamentous fungus Neurospora crassa.</title>
        <authorList>
            <person name="Galagan J.E."/>
            <person name="Calvo S.E."/>
            <person name="Borkovich K.A."/>
            <person name="Selker E.U."/>
            <person name="Read N.D."/>
            <person name="Jaffe D.B."/>
            <person name="FitzHugh W."/>
            <person name="Ma L.-J."/>
            <person name="Smirnov S."/>
            <person name="Purcell S."/>
            <person name="Rehman B."/>
            <person name="Elkins T."/>
            <person name="Engels R."/>
            <person name="Wang S."/>
            <person name="Nielsen C.B."/>
            <person name="Butler J."/>
            <person name="Endrizzi M."/>
            <person name="Qui D."/>
            <person name="Ianakiev P."/>
            <person name="Bell-Pedersen D."/>
            <person name="Nelson M.A."/>
            <person name="Werner-Washburne M."/>
            <person name="Selitrennikoff C.P."/>
            <person name="Kinsey J.A."/>
            <person name="Braun E.L."/>
            <person name="Zelter A."/>
            <person name="Schulte U."/>
            <person name="Kothe G.O."/>
            <person name="Jedd G."/>
            <person name="Mewes H.-W."/>
            <person name="Staben C."/>
            <person name="Marcotte E."/>
            <person name="Greenberg D."/>
            <person name="Roy A."/>
            <person name="Foley K."/>
            <person name="Naylor J."/>
            <person name="Stange-Thomann N."/>
            <person name="Barrett R."/>
            <person name="Gnerre S."/>
            <person name="Kamal M."/>
            <person name="Kamvysselis M."/>
            <person name="Mauceli E.W."/>
            <person name="Bielke C."/>
            <person name="Rudd S."/>
            <person name="Frishman D."/>
            <person name="Krystofova S."/>
            <person name="Rasmussen C."/>
            <person name="Metzenberg R.L."/>
            <person name="Perkins D.D."/>
            <person name="Kroken S."/>
            <person name="Cogoni C."/>
            <person name="Macino G."/>
            <person name="Catcheside D.E.A."/>
            <person name="Li W."/>
            <person name="Pratt R.J."/>
            <person name="Osmani S.A."/>
            <person name="DeSouza C.P.C."/>
            <person name="Glass N.L."/>
            <person name="Orbach M.J."/>
            <person name="Berglund J.A."/>
            <person name="Voelker R."/>
            <person name="Yarden O."/>
            <person name="Plamann M."/>
            <person name="Seiler S."/>
            <person name="Dunlap J.C."/>
            <person name="Radford A."/>
            <person name="Aramayo R."/>
            <person name="Natvig D.O."/>
            <person name="Alex L.A."/>
            <person name="Mannhaupt G."/>
            <person name="Ebbole D.J."/>
            <person name="Freitag M."/>
            <person name="Paulsen I."/>
            <person name="Sachs M.S."/>
            <person name="Lander E.S."/>
            <person name="Nusbaum C."/>
            <person name="Birren B.W."/>
        </authorList>
    </citation>
    <scope>NUCLEOTIDE SEQUENCE [LARGE SCALE GENOMIC DNA]</scope>
    <source>
        <strain>ATCC 24698 / 74-OR23-1A / CBS 708.71 / DSM 1257 / FGSC 987</strain>
    </source>
</reference>
<accession>Q7S873</accession>
<organism>
    <name type="scientific">Neurospora crassa (strain ATCC 24698 / 74-OR23-1A / CBS 708.71 / DSM 1257 / FGSC 987)</name>
    <dbReference type="NCBI Taxonomy" id="367110"/>
    <lineage>
        <taxon>Eukaryota</taxon>
        <taxon>Fungi</taxon>
        <taxon>Dikarya</taxon>
        <taxon>Ascomycota</taxon>
        <taxon>Pezizomycotina</taxon>
        <taxon>Sordariomycetes</taxon>
        <taxon>Sordariomycetidae</taxon>
        <taxon>Sordariales</taxon>
        <taxon>Sordariaceae</taxon>
        <taxon>Neurospora</taxon>
    </lineage>
</organism>
<name>DBP7_NEUCR</name>
<gene>
    <name type="primary">dbp-7</name>
    <name type="ORF">NCU06520</name>
</gene>
<feature type="chain" id="PRO_0000232258" description="ATP-dependent RNA helicase dbp-7">
    <location>
        <begin position="1"/>
        <end position="814"/>
    </location>
</feature>
<feature type="domain" description="Helicase ATP-binding" evidence="2">
    <location>
        <begin position="178"/>
        <end position="384"/>
    </location>
</feature>
<feature type="domain" description="Helicase C-terminal" evidence="3">
    <location>
        <begin position="422"/>
        <end position="622"/>
    </location>
</feature>
<feature type="region of interest" description="Disordered" evidence="4">
    <location>
        <begin position="26"/>
        <end position="102"/>
    </location>
</feature>
<feature type="region of interest" description="Disordered" evidence="4">
    <location>
        <begin position="464"/>
        <end position="483"/>
    </location>
</feature>
<feature type="region of interest" description="Disordered" evidence="4">
    <location>
        <begin position="662"/>
        <end position="695"/>
    </location>
</feature>
<feature type="region of interest" description="Disordered" evidence="4">
    <location>
        <begin position="741"/>
        <end position="795"/>
    </location>
</feature>
<feature type="short sequence motif" description="Q motif">
    <location>
        <begin position="145"/>
        <end position="174"/>
    </location>
</feature>
<feature type="short sequence motif" description="DEAD box">
    <location>
        <begin position="313"/>
        <end position="316"/>
    </location>
</feature>
<feature type="compositionally biased region" description="Basic and acidic residues" evidence="4">
    <location>
        <begin position="28"/>
        <end position="42"/>
    </location>
</feature>
<feature type="compositionally biased region" description="Basic and acidic residues" evidence="4">
    <location>
        <begin position="69"/>
        <end position="78"/>
    </location>
</feature>
<feature type="compositionally biased region" description="Basic and acidic residues" evidence="4">
    <location>
        <begin position="467"/>
        <end position="477"/>
    </location>
</feature>
<feature type="compositionally biased region" description="Acidic residues" evidence="4">
    <location>
        <begin position="779"/>
        <end position="790"/>
    </location>
</feature>
<feature type="binding site" evidence="2">
    <location>
        <begin position="191"/>
        <end position="198"/>
    </location>
    <ligand>
        <name>ATP</name>
        <dbReference type="ChEBI" id="CHEBI:30616"/>
    </ligand>
</feature>
<evidence type="ECO:0000250" key="1"/>
<evidence type="ECO:0000255" key="2">
    <source>
        <dbReference type="PROSITE-ProRule" id="PRU00541"/>
    </source>
</evidence>
<evidence type="ECO:0000255" key="3">
    <source>
        <dbReference type="PROSITE-ProRule" id="PRU00542"/>
    </source>
</evidence>
<evidence type="ECO:0000256" key="4">
    <source>
        <dbReference type="SAM" id="MobiDB-lite"/>
    </source>
</evidence>
<evidence type="ECO:0000305" key="5"/>